<proteinExistence type="evidence at protein level"/>
<comment type="function">
    <text evidence="2">Alpha-conotoxins act on postsynaptic membranes, they bind to the nicotinic acetylcholine receptors (nAChR) and thus inhibit them. This toxin blocks rat neuronal nAChR alpha-3-beta-2/CHRNA3-CHRNB2 (IC(50)=128.9 nM) and alpha-7/CHRNA7 (IC(50)=1511 nM) (PubMed:29857567). In vivo, intramuscular injection into zebrafish does not produce any effect on the locomotion of zebrafish (PubMed:29857567).</text>
</comment>
<comment type="subcellular location">
    <subcellularLocation>
        <location evidence="6">Secreted</location>
    </subcellularLocation>
</comment>
<comment type="tissue specificity">
    <text evidence="6">Expressed by the venom duct.</text>
</comment>
<comment type="domain">
    <text evidence="5">The cysteine framework is I (CC-C-C). Alpha4/7 pattern.</text>
</comment>
<comment type="miscellaneous">
    <text evidence="2">Negative results: this toxin does not show effect on neuronal nAChR alpha-4-beta-2/CHRNA4-CHRNB2 and on muscular alpha-1-beta-1-gamma-delta (CHRNA1-CHRNB1-CHRNG-CHRND) (when tested at 10 uM).</text>
</comment>
<comment type="similarity">
    <text evidence="5">Belongs to the conotoxin A superfamily.</text>
</comment>
<accession>P0DPT2</accession>
<feature type="propeptide" id="PRO_0000446310" evidence="5">
    <location>
        <begin position="1" status="less than"/>
        <end position="21"/>
    </location>
</feature>
<feature type="peptide" id="PRO_0000446311" description="Alpha-conotoxin CIB" evidence="1">
    <location>
        <begin position="22"/>
        <end position="37"/>
    </location>
</feature>
<feature type="region of interest" description="Ser-Xaa-Pro motif, crucial for potent interaction with nAChR" evidence="1">
    <location>
        <begin position="25"/>
        <end position="27"/>
    </location>
</feature>
<feature type="modified residue" description="Cysteine amide" evidence="1">
    <location>
        <position position="37"/>
    </location>
</feature>
<feature type="disulfide bond" evidence="1">
    <location>
        <begin position="23"/>
        <end position="29"/>
    </location>
</feature>
<feature type="disulfide bond" evidence="1">
    <location>
        <begin position="24"/>
        <end position="37"/>
    </location>
</feature>
<feature type="non-terminal residue">
    <location>
        <position position="1"/>
    </location>
</feature>
<dbReference type="EMBL" id="BD261484">
    <property type="status" value="NOT_ANNOTATED_CDS"/>
    <property type="molecule type" value="Unassigned_DNA"/>
</dbReference>
<dbReference type="ConoServer" id="8017">
    <property type="toxin name" value="CIB"/>
</dbReference>
<dbReference type="GO" id="GO:0005576">
    <property type="term" value="C:extracellular region"/>
    <property type="evidence" value="ECO:0007669"/>
    <property type="project" value="UniProtKB-SubCell"/>
</dbReference>
<dbReference type="GO" id="GO:0035792">
    <property type="term" value="C:host cell postsynaptic membrane"/>
    <property type="evidence" value="ECO:0007669"/>
    <property type="project" value="UniProtKB-KW"/>
</dbReference>
<dbReference type="GO" id="GO:0030550">
    <property type="term" value="F:acetylcholine receptor inhibitor activity"/>
    <property type="evidence" value="ECO:0007669"/>
    <property type="project" value="UniProtKB-KW"/>
</dbReference>
<dbReference type="GO" id="GO:0099106">
    <property type="term" value="F:ion channel regulator activity"/>
    <property type="evidence" value="ECO:0007669"/>
    <property type="project" value="UniProtKB-KW"/>
</dbReference>
<dbReference type="GO" id="GO:0090729">
    <property type="term" value="F:toxin activity"/>
    <property type="evidence" value="ECO:0007669"/>
    <property type="project" value="UniProtKB-KW"/>
</dbReference>
<dbReference type="InterPro" id="IPR009958">
    <property type="entry name" value="Conotoxin_a-typ"/>
</dbReference>
<dbReference type="Pfam" id="PF07365">
    <property type="entry name" value="Toxin_8"/>
    <property type="match status" value="1"/>
</dbReference>
<name>CA1B_CONCT</name>
<organism>
    <name type="scientific">Conus catus</name>
    <name type="common">Cat cone</name>
    <dbReference type="NCBI Taxonomy" id="101291"/>
    <lineage>
        <taxon>Eukaryota</taxon>
        <taxon>Metazoa</taxon>
        <taxon>Spiralia</taxon>
        <taxon>Lophotrochozoa</taxon>
        <taxon>Mollusca</taxon>
        <taxon>Gastropoda</taxon>
        <taxon>Caenogastropoda</taxon>
        <taxon>Neogastropoda</taxon>
        <taxon>Conoidea</taxon>
        <taxon>Conidae</taxon>
        <taxon>Conus</taxon>
        <taxon>Pionoconus</taxon>
    </lineage>
</organism>
<sequence length="41" mass="4409">SDGRNEAANDEASDVIELALKGCCSNPVCHLEHPNACGRRR</sequence>
<protein>
    <recommendedName>
        <fullName evidence="4">Alpha-conotoxin CIB</fullName>
    </recommendedName>
    <alternativeName>
        <fullName evidence="3">C1.2</fullName>
    </alternativeName>
</protein>
<evidence type="ECO:0000250" key="1">
    <source>
        <dbReference type="UniProtKB" id="P56636"/>
    </source>
</evidence>
<evidence type="ECO:0000269" key="2">
    <source>
    </source>
</evidence>
<evidence type="ECO:0000303" key="3">
    <source>
    </source>
</evidence>
<evidence type="ECO:0000303" key="4">
    <source>
    </source>
</evidence>
<evidence type="ECO:0000305" key="5"/>
<evidence type="ECO:0000305" key="6">
    <source>
    </source>
</evidence>
<keyword id="KW-0008">Acetylcholine receptor inhibiting toxin</keyword>
<keyword id="KW-0027">Amidation</keyword>
<keyword id="KW-1015">Disulfide bond</keyword>
<keyword id="KW-0872">Ion channel impairing toxin</keyword>
<keyword id="KW-0528">Neurotoxin</keyword>
<keyword id="KW-0629">Postsynaptic neurotoxin</keyword>
<keyword id="KW-0964">Secreted</keyword>
<keyword id="KW-0800">Toxin</keyword>
<reference key="1">
    <citation type="journal article" date="2010" name="J. Mol. Evol.">
        <title>Evolution of conus peptide genes: duplication and positive selection in the A-Superfamily.</title>
        <authorList>
            <person name="Puillandre N."/>
            <person name="Watkins M."/>
            <person name="Olivera B.M."/>
        </authorList>
    </citation>
    <scope>NUCLEOTIDE SEQUENCE</scope>
</reference>
<reference key="2">
    <citation type="journal article" date="2018" name="Toxins">
        <title>Synthesis, structure and biological activity of CIA and CIB, two alpha-conotoxins from the predation-evoked venom of Conus catus.</title>
        <authorList>
            <person name="Giribaldi J."/>
            <person name="Wilson D."/>
            <person name="Nicke A."/>
            <person name="El Hamdaoui Y."/>
            <person name="Laconde G."/>
            <person name="Faucherre A."/>
            <person name="Moha Ou Maati H."/>
            <person name="Daly N.L."/>
            <person name="Enjalbal C."/>
            <person name="Dutertre S."/>
        </authorList>
    </citation>
    <scope>FUNCTION</scope>
    <scope>BIOASSAY</scope>
    <scope>SYNTHESIS OF 22-37</scope>
    <scope>STRUCTURE BY NMR OF 22-37</scope>
</reference>